<organism>
    <name type="scientific">Streptococcus thermophilus (strain ATCC BAA-491 / LMD-9)</name>
    <dbReference type="NCBI Taxonomy" id="322159"/>
    <lineage>
        <taxon>Bacteria</taxon>
        <taxon>Bacillati</taxon>
        <taxon>Bacillota</taxon>
        <taxon>Bacilli</taxon>
        <taxon>Lactobacillales</taxon>
        <taxon>Streptococcaceae</taxon>
        <taxon>Streptococcus</taxon>
    </lineage>
</organism>
<feature type="chain" id="PRO_1000052669" description="Large ribosomal subunit protein uL22">
    <location>
        <begin position="1"/>
        <end position="114"/>
    </location>
</feature>
<name>RL22_STRTD</name>
<protein>
    <recommendedName>
        <fullName evidence="1">Large ribosomal subunit protein uL22</fullName>
    </recommendedName>
    <alternativeName>
        <fullName evidence="2">50S ribosomal protein L22</fullName>
    </alternativeName>
</protein>
<accession>Q03IF6</accession>
<comment type="function">
    <text evidence="1">This protein binds specifically to 23S rRNA; its binding is stimulated by other ribosomal proteins, e.g. L4, L17, and L20. It is important during the early stages of 50S assembly. It makes multiple contacts with different domains of the 23S rRNA in the assembled 50S subunit and ribosome (By similarity).</text>
</comment>
<comment type="function">
    <text evidence="1">The globular domain of the protein is located near the polypeptide exit tunnel on the outside of the subunit, while an extended beta-hairpin is found that lines the wall of the exit tunnel in the center of the 70S ribosome.</text>
</comment>
<comment type="subunit">
    <text evidence="1">Part of the 50S ribosomal subunit.</text>
</comment>
<comment type="similarity">
    <text evidence="1">Belongs to the universal ribosomal protein uL22 family.</text>
</comment>
<proteinExistence type="inferred from homology"/>
<sequence>MAEITSAKAMARTVRVSPRKTRLVLDLIRGKNVADAIAILKFTPNKAARIVEKTLNSAIANAENNFGLEKANLVVSETFANEGPTMKRFRPRAKGSASPINKRTTHVTVVVSEK</sequence>
<gene>
    <name evidence="1" type="primary">rplV</name>
    <name type="ordered locus">STER_1902</name>
</gene>
<dbReference type="EMBL" id="CP000419">
    <property type="protein sequence ID" value="ABJ67016.1"/>
    <property type="molecule type" value="Genomic_DNA"/>
</dbReference>
<dbReference type="RefSeq" id="WP_002887063.1">
    <property type="nucleotide sequence ID" value="NZ_CP086001.1"/>
</dbReference>
<dbReference type="SMR" id="Q03IF6"/>
<dbReference type="GeneID" id="93793081"/>
<dbReference type="KEGG" id="ste:STER_1902"/>
<dbReference type="HOGENOM" id="CLU_083987_3_3_9"/>
<dbReference type="GO" id="GO:0022625">
    <property type="term" value="C:cytosolic large ribosomal subunit"/>
    <property type="evidence" value="ECO:0007669"/>
    <property type="project" value="TreeGrafter"/>
</dbReference>
<dbReference type="GO" id="GO:0019843">
    <property type="term" value="F:rRNA binding"/>
    <property type="evidence" value="ECO:0007669"/>
    <property type="project" value="UniProtKB-UniRule"/>
</dbReference>
<dbReference type="GO" id="GO:0003735">
    <property type="term" value="F:structural constituent of ribosome"/>
    <property type="evidence" value="ECO:0007669"/>
    <property type="project" value="InterPro"/>
</dbReference>
<dbReference type="GO" id="GO:0006412">
    <property type="term" value="P:translation"/>
    <property type="evidence" value="ECO:0007669"/>
    <property type="project" value="UniProtKB-UniRule"/>
</dbReference>
<dbReference type="CDD" id="cd00336">
    <property type="entry name" value="Ribosomal_L22"/>
    <property type="match status" value="1"/>
</dbReference>
<dbReference type="FunFam" id="3.90.470.10:FF:000001">
    <property type="entry name" value="50S ribosomal protein L22"/>
    <property type="match status" value="1"/>
</dbReference>
<dbReference type="Gene3D" id="3.90.470.10">
    <property type="entry name" value="Ribosomal protein L22/L17"/>
    <property type="match status" value="1"/>
</dbReference>
<dbReference type="HAMAP" id="MF_01331_B">
    <property type="entry name" value="Ribosomal_uL22_B"/>
    <property type="match status" value="1"/>
</dbReference>
<dbReference type="InterPro" id="IPR001063">
    <property type="entry name" value="Ribosomal_uL22"/>
</dbReference>
<dbReference type="InterPro" id="IPR005727">
    <property type="entry name" value="Ribosomal_uL22_bac/chlpt-type"/>
</dbReference>
<dbReference type="InterPro" id="IPR047867">
    <property type="entry name" value="Ribosomal_uL22_bac/org-type"/>
</dbReference>
<dbReference type="InterPro" id="IPR018260">
    <property type="entry name" value="Ribosomal_uL22_CS"/>
</dbReference>
<dbReference type="InterPro" id="IPR036394">
    <property type="entry name" value="Ribosomal_uL22_sf"/>
</dbReference>
<dbReference type="NCBIfam" id="TIGR01044">
    <property type="entry name" value="rplV_bact"/>
    <property type="match status" value="1"/>
</dbReference>
<dbReference type="PANTHER" id="PTHR13501">
    <property type="entry name" value="CHLOROPLAST 50S RIBOSOMAL PROTEIN L22-RELATED"/>
    <property type="match status" value="1"/>
</dbReference>
<dbReference type="PANTHER" id="PTHR13501:SF8">
    <property type="entry name" value="LARGE RIBOSOMAL SUBUNIT PROTEIN UL22M"/>
    <property type="match status" value="1"/>
</dbReference>
<dbReference type="Pfam" id="PF00237">
    <property type="entry name" value="Ribosomal_L22"/>
    <property type="match status" value="1"/>
</dbReference>
<dbReference type="SUPFAM" id="SSF54843">
    <property type="entry name" value="Ribosomal protein L22"/>
    <property type="match status" value="1"/>
</dbReference>
<dbReference type="PROSITE" id="PS00464">
    <property type="entry name" value="RIBOSOMAL_L22"/>
    <property type="match status" value="1"/>
</dbReference>
<reference key="1">
    <citation type="journal article" date="2006" name="Proc. Natl. Acad. Sci. U.S.A.">
        <title>Comparative genomics of the lactic acid bacteria.</title>
        <authorList>
            <person name="Makarova K.S."/>
            <person name="Slesarev A."/>
            <person name="Wolf Y.I."/>
            <person name="Sorokin A."/>
            <person name="Mirkin B."/>
            <person name="Koonin E.V."/>
            <person name="Pavlov A."/>
            <person name="Pavlova N."/>
            <person name="Karamychev V."/>
            <person name="Polouchine N."/>
            <person name="Shakhova V."/>
            <person name="Grigoriev I."/>
            <person name="Lou Y."/>
            <person name="Rohksar D."/>
            <person name="Lucas S."/>
            <person name="Huang K."/>
            <person name="Goodstein D.M."/>
            <person name="Hawkins T."/>
            <person name="Plengvidhya V."/>
            <person name="Welker D."/>
            <person name="Hughes J."/>
            <person name="Goh Y."/>
            <person name="Benson A."/>
            <person name="Baldwin K."/>
            <person name="Lee J.-H."/>
            <person name="Diaz-Muniz I."/>
            <person name="Dosti B."/>
            <person name="Smeianov V."/>
            <person name="Wechter W."/>
            <person name="Barabote R."/>
            <person name="Lorca G."/>
            <person name="Altermann E."/>
            <person name="Barrangou R."/>
            <person name="Ganesan B."/>
            <person name="Xie Y."/>
            <person name="Rawsthorne H."/>
            <person name="Tamir D."/>
            <person name="Parker C."/>
            <person name="Breidt F."/>
            <person name="Broadbent J.R."/>
            <person name="Hutkins R."/>
            <person name="O'Sullivan D."/>
            <person name="Steele J."/>
            <person name="Unlu G."/>
            <person name="Saier M.H. Jr."/>
            <person name="Klaenhammer T."/>
            <person name="Richardson P."/>
            <person name="Kozyavkin S."/>
            <person name="Weimer B.C."/>
            <person name="Mills D.A."/>
        </authorList>
    </citation>
    <scope>NUCLEOTIDE SEQUENCE [LARGE SCALE GENOMIC DNA]</scope>
    <source>
        <strain>ATCC BAA-491 / LMD-9</strain>
    </source>
</reference>
<evidence type="ECO:0000255" key="1">
    <source>
        <dbReference type="HAMAP-Rule" id="MF_01331"/>
    </source>
</evidence>
<evidence type="ECO:0000305" key="2"/>
<keyword id="KW-0687">Ribonucleoprotein</keyword>
<keyword id="KW-0689">Ribosomal protein</keyword>
<keyword id="KW-0694">RNA-binding</keyword>
<keyword id="KW-0699">rRNA-binding</keyword>